<sequence>MDLSVLDRLKWLQQQQMVSPEFLQILGSDGREELKRVESYLGNNNDELQSFRHFPEFGPDYDTTDGCISRTSSFHMEPVKNNGHSRAITLQNKRKPEGKTEKREKKKIKAEDETEPSMKGKSNMSNTETSSEIQKPDYIHVRARRGEATDRHSLAERARREKISKKMKCLQDIVPGCNKVTGKAGMLDEIINYVQSLQQQVEFLSMKLSVINPELECHIDDLSAKQFQAYFTGPPEGDSKQSIMADFRSFPLHQQGSLDYSVINSDHTTSLGAKDHTSSSWETHSQCLYNSLRTDSVSNFFSLK</sequence>
<organism>
    <name type="scientific">Arabidopsis thaliana</name>
    <name type="common">Mouse-ear cress</name>
    <dbReference type="NCBI Taxonomy" id="3702"/>
    <lineage>
        <taxon>Eukaryota</taxon>
        <taxon>Viridiplantae</taxon>
        <taxon>Streptophyta</taxon>
        <taxon>Embryophyta</taxon>
        <taxon>Tracheophyta</taxon>
        <taxon>Spermatophyta</taxon>
        <taxon>Magnoliopsida</taxon>
        <taxon>eudicotyledons</taxon>
        <taxon>Gunneridae</taxon>
        <taxon>Pentapetalae</taxon>
        <taxon>rosids</taxon>
        <taxon>malvids</taxon>
        <taxon>Brassicales</taxon>
        <taxon>Brassicaceae</taxon>
        <taxon>Camelineae</taxon>
        <taxon>Arabidopsis</taxon>
    </lineage>
</organism>
<gene>
    <name type="primary">BEE2</name>
    <name type="synonym">BHLH58</name>
    <name type="synonym">EN80</name>
    <name type="ordered locus">At4g36540</name>
    <name type="ORF">AP22.3</name>
</gene>
<comment type="function">
    <text evidence="3">Positive regulator of brassinosteroid signaling.</text>
</comment>
<comment type="subunit">
    <text evidence="5">Homodimer.</text>
</comment>
<comment type="interaction">
    <interactant intactId="EBI-4424312">
        <id>Q93VJ4</id>
    </interactant>
    <interactant intactId="EBI-25520520">
        <id>A0A384L5D0</id>
        <label>At3g29370</label>
    </interactant>
    <organismsDiffer>false</organismsDiffer>
    <experiments>3</experiments>
</comment>
<comment type="interaction">
    <interactant intactId="EBI-4424312">
        <id>Q93VJ4</id>
    </interactant>
    <interactant intactId="EBI-4434374">
        <id>Q9C8Z9</id>
        <label>BHLH148</label>
    </interactant>
    <organismsDiffer>false</organismsDiffer>
    <experiments>4</experiments>
</comment>
<comment type="interaction">
    <interactant intactId="EBI-4424312">
        <id>Q93VJ4</id>
    </interactant>
    <interactant intactId="EBI-4433589">
        <id>Q9SKX1</id>
        <label>IBH1</label>
    </interactant>
    <organismsDiffer>false</organismsDiffer>
    <experiments>4</experiments>
</comment>
<comment type="interaction">
    <interactant intactId="EBI-4424312">
        <id>Q93VJ4</id>
    </interactant>
    <interactant intactId="EBI-15192969">
        <id>Q9M0B9</id>
        <label>IBL1</label>
    </interactant>
    <organismsDiffer>false</organismsDiffer>
    <experiments>3</experiments>
</comment>
<comment type="interaction">
    <interactant intactId="EBI-4424312">
        <id>Q93VJ4</id>
    </interactant>
    <interactant intactId="EBI-1645478">
        <id>Q38845</id>
        <label>PP2AA1</label>
    </interactant>
    <organismsDiffer>false</organismsDiffer>
    <experiments>3</experiments>
</comment>
<comment type="interaction">
    <interactant intactId="EBI-4424312">
        <id>Q93VJ4</id>
    </interactant>
    <interactant intactId="EBI-4426144">
        <id>Q9C9L2</id>
        <label>TCP15</label>
    </interactant>
    <organismsDiffer>false</organismsDiffer>
    <experiments>3</experiments>
</comment>
<comment type="interaction">
    <interactant intactId="EBI-4424312">
        <id>Q93VJ4</id>
    </interactant>
    <interactant intactId="EBI-15192297">
        <id>Q9LQF0</id>
        <label>TCP23</label>
    </interactant>
    <organismsDiffer>false</organismsDiffer>
    <experiments>5</experiments>
</comment>
<comment type="subcellular location">
    <subcellularLocation>
        <location evidence="5">Nucleus</location>
    </subcellularLocation>
</comment>
<comment type="alternative products">
    <event type="alternative splicing"/>
    <isoform>
        <id>Q93VJ4-1</id>
        <name>1</name>
        <sequence type="displayed"/>
    </isoform>
    <isoform>
        <id>Q93VJ4-2</id>
        <name>2</name>
        <sequence type="described" ref="VSP_027917"/>
    </isoform>
</comment>
<comment type="tissue specificity">
    <text evidence="4">Expressed in stems and flowers.</text>
</comment>
<comment type="induction">
    <text evidence="3 4">Induced by flagellin, jasmonic acid (JA), brassinosteroid and cytokinin, and repressed by abscisic acid. Insensitive to gibberellic acid.</text>
</comment>
<comment type="disruption phenotype">
    <text evidence="3">No visible phenotype. Redundant with BEE1 and BEE3.</text>
</comment>
<comment type="miscellaneous">
    <molecule>Isoform 2</molecule>
    <text evidence="5">May be due to a competing acceptor splice site.</text>
</comment>
<comment type="sequence caution" evidence="5">
    <conflict type="erroneous initiation">
        <sequence resource="EMBL-CDS" id="AAM61556"/>
    </conflict>
</comment>
<comment type="sequence caution" evidence="5">
    <conflict type="erroneous gene model prediction">
        <sequence resource="EMBL-CDS" id="CAB16839"/>
    </conflict>
</comment>
<comment type="sequence caution" evidence="5">
    <conflict type="erroneous gene model prediction">
        <sequence resource="EMBL-CDS" id="CAB80320"/>
    </conflict>
</comment>
<feature type="chain" id="PRO_0000302043" description="Transcription factor BEE 2">
    <location>
        <begin position="1"/>
        <end position="304"/>
    </location>
</feature>
<feature type="domain" description="bHLH" evidence="1">
    <location>
        <begin position="147"/>
        <end position="197"/>
    </location>
</feature>
<feature type="region of interest" description="Disordered" evidence="2">
    <location>
        <begin position="74"/>
        <end position="132"/>
    </location>
</feature>
<feature type="compositionally biased region" description="Polar residues" evidence="2">
    <location>
        <begin position="82"/>
        <end position="91"/>
    </location>
</feature>
<feature type="compositionally biased region" description="Basic and acidic residues" evidence="2">
    <location>
        <begin position="94"/>
        <end position="103"/>
    </location>
</feature>
<feature type="compositionally biased region" description="Polar residues" evidence="2">
    <location>
        <begin position="120"/>
        <end position="132"/>
    </location>
</feature>
<feature type="splice variant" id="VSP_027917" description="In isoform 2." evidence="5">
    <location>
        <begin position="226"/>
        <end position="227"/>
    </location>
</feature>
<feature type="sequence conflict" description="In Ref. 1; AAM10947." evidence="5" ref="1">
    <original>N</original>
    <variation>Y</variation>
    <location>
        <position position="81"/>
    </location>
</feature>
<feature type="sequence conflict" description="In Ref. 6; AAM61556." evidence="5" ref="6">
    <original>V</original>
    <variation>I</variation>
    <location>
        <position position="297"/>
    </location>
</feature>
<feature type="sequence conflict" description="In Ref. 5; AAN15707/AAK96779." evidence="5" ref="5">
    <original>N</original>
    <variation>S</variation>
    <location>
        <position position="299"/>
    </location>
</feature>
<reference key="1">
    <citation type="journal article" date="2003" name="Mol. Biol. Evol.">
        <title>The basic helix-loop-helix transcription factor family in plants: a genome-wide study of protein structure and functional diversity.</title>
        <authorList>
            <person name="Heim M.A."/>
            <person name="Jakoby M."/>
            <person name="Werber M."/>
            <person name="Martin C."/>
            <person name="Weisshaar B."/>
            <person name="Bailey P.C."/>
        </authorList>
    </citation>
    <scope>NUCLEOTIDE SEQUENCE [MRNA] (ISOFORM 1)</scope>
    <scope>TISSUE SPECIFICITY</scope>
    <scope>INDUCTION</scope>
    <scope>GENE FAMILY</scope>
    <scope>NOMENCLATURE</scope>
    <source>
        <strain>cv. Columbia</strain>
        <tissue>Stem</tissue>
    </source>
</reference>
<reference key="2">
    <citation type="journal article" date="1998" name="Nature">
        <title>Analysis of 1.9 Mb of contiguous sequence from chromosome 4 of Arabidopsis thaliana.</title>
        <authorList>
            <person name="Bevan M."/>
            <person name="Bancroft I."/>
            <person name="Bent E."/>
            <person name="Love K."/>
            <person name="Goodman H.M."/>
            <person name="Dean C."/>
            <person name="Bergkamp R."/>
            <person name="Dirkse W."/>
            <person name="van Staveren M."/>
            <person name="Stiekema W."/>
            <person name="Drost L."/>
            <person name="Ridley P."/>
            <person name="Hudson S.-A."/>
            <person name="Patel K."/>
            <person name="Murphy G."/>
            <person name="Piffanelli P."/>
            <person name="Wedler H."/>
            <person name="Wedler E."/>
            <person name="Wambutt R."/>
            <person name="Weitzenegger T."/>
            <person name="Pohl T."/>
            <person name="Terryn N."/>
            <person name="Gielen J."/>
            <person name="Villarroel R."/>
            <person name="De Clercq R."/>
            <person name="van Montagu M."/>
            <person name="Lecharny A."/>
            <person name="Aubourg S."/>
            <person name="Gy I."/>
            <person name="Kreis M."/>
            <person name="Lao N."/>
            <person name="Kavanagh T."/>
            <person name="Hempel S."/>
            <person name="Kotter P."/>
            <person name="Entian K.-D."/>
            <person name="Rieger M."/>
            <person name="Schaefer M."/>
            <person name="Funk B."/>
            <person name="Mueller-Auer S."/>
            <person name="Silvey M."/>
            <person name="James R."/>
            <person name="Monfort A."/>
            <person name="Pons A."/>
            <person name="Puigdomenech P."/>
            <person name="Douka A."/>
            <person name="Voukelatou E."/>
            <person name="Milioni D."/>
            <person name="Hatzopoulos P."/>
            <person name="Piravandi E."/>
            <person name="Obermaier B."/>
            <person name="Hilbert H."/>
            <person name="Duesterhoeft A."/>
            <person name="Moores T."/>
            <person name="Jones J.D.G."/>
            <person name="Eneva T."/>
            <person name="Palme K."/>
            <person name="Benes V."/>
            <person name="Rechmann S."/>
            <person name="Ansorge W."/>
            <person name="Cooke R."/>
            <person name="Berger C."/>
            <person name="Delseny M."/>
            <person name="Voet M."/>
            <person name="Volckaert G."/>
            <person name="Mewes H.-W."/>
            <person name="Klosterman S."/>
            <person name="Schueller C."/>
            <person name="Chalwatzis N."/>
        </authorList>
    </citation>
    <scope>NUCLEOTIDE SEQUENCE [LARGE SCALE GENOMIC DNA]</scope>
    <source>
        <strain>cv. Columbia</strain>
    </source>
</reference>
<reference key="3">
    <citation type="journal article" date="1999" name="Nature">
        <title>Sequence and analysis of chromosome 4 of the plant Arabidopsis thaliana.</title>
        <authorList>
            <person name="Mayer K.F.X."/>
            <person name="Schueller C."/>
            <person name="Wambutt R."/>
            <person name="Murphy G."/>
            <person name="Volckaert G."/>
            <person name="Pohl T."/>
            <person name="Duesterhoeft A."/>
            <person name="Stiekema W."/>
            <person name="Entian K.-D."/>
            <person name="Terryn N."/>
            <person name="Harris B."/>
            <person name="Ansorge W."/>
            <person name="Brandt P."/>
            <person name="Grivell L.A."/>
            <person name="Rieger M."/>
            <person name="Weichselgartner M."/>
            <person name="de Simone V."/>
            <person name="Obermaier B."/>
            <person name="Mache R."/>
            <person name="Mueller M."/>
            <person name="Kreis M."/>
            <person name="Delseny M."/>
            <person name="Puigdomenech P."/>
            <person name="Watson M."/>
            <person name="Schmidtheini T."/>
            <person name="Reichert B."/>
            <person name="Portetelle D."/>
            <person name="Perez-Alonso M."/>
            <person name="Boutry M."/>
            <person name="Bancroft I."/>
            <person name="Vos P."/>
            <person name="Hoheisel J."/>
            <person name="Zimmermann W."/>
            <person name="Wedler H."/>
            <person name="Ridley P."/>
            <person name="Langham S.-A."/>
            <person name="McCullagh B."/>
            <person name="Bilham L."/>
            <person name="Robben J."/>
            <person name="van der Schueren J."/>
            <person name="Grymonprez B."/>
            <person name="Chuang Y.-J."/>
            <person name="Vandenbussche F."/>
            <person name="Braeken M."/>
            <person name="Weltjens I."/>
            <person name="Voet M."/>
            <person name="Bastiaens I."/>
            <person name="Aert R."/>
            <person name="Defoor E."/>
            <person name="Weitzenegger T."/>
            <person name="Bothe G."/>
            <person name="Ramsperger U."/>
            <person name="Hilbert H."/>
            <person name="Braun M."/>
            <person name="Holzer E."/>
            <person name="Brandt A."/>
            <person name="Peters S."/>
            <person name="van Staveren M."/>
            <person name="Dirkse W."/>
            <person name="Mooijman P."/>
            <person name="Klein Lankhorst R."/>
            <person name="Rose M."/>
            <person name="Hauf J."/>
            <person name="Koetter P."/>
            <person name="Berneiser S."/>
            <person name="Hempel S."/>
            <person name="Feldpausch M."/>
            <person name="Lamberth S."/>
            <person name="Van den Daele H."/>
            <person name="De Keyser A."/>
            <person name="Buysshaert C."/>
            <person name="Gielen J."/>
            <person name="Villarroel R."/>
            <person name="De Clercq R."/>
            <person name="van Montagu M."/>
            <person name="Rogers J."/>
            <person name="Cronin A."/>
            <person name="Quail M.A."/>
            <person name="Bray-Allen S."/>
            <person name="Clark L."/>
            <person name="Doggett J."/>
            <person name="Hall S."/>
            <person name="Kay M."/>
            <person name="Lennard N."/>
            <person name="McLay K."/>
            <person name="Mayes R."/>
            <person name="Pettett A."/>
            <person name="Rajandream M.A."/>
            <person name="Lyne M."/>
            <person name="Benes V."/>
            <person name="Rechmann S."/>
            <person name="Borkova D."/>
            <person name="Bloecker H."/>
            <person name="Scharfe M."/>
            <person name="Grimm M."/>
            <person name="Loehnert T.-H."/>
            <person name="Dose S."/>
            <person name="de Haan M."/>
            <person name="Maarse A.C."/>
            <person name="Schaefer M."/>
            <person name="Mueller-Auer S."/>
            <person name="Gabel C."/>
            <person name="Fuchs M."/>
            <person name="Fartmann B."/>
            <person name="Granderath K."/>
            <person name="Dauner D."/>
            <person name="Herzl A."/>
            <person name="Neumann S."/>
            <person name="Argiriou A."/>
            <person name="Vitale D."/>
            <person name="Liguori R."/>
            <person name="Piravandi E."/>
            <person name="Massenet O."/>
            <person name="Quigley F."/>
            <person name="Clabauld G."/>
            <person name="Muendlein A."/>
            <person name="Felber R."/>
            <person name="Schnabl S."/>
            <person name="Hiller R."/>
            <person name="Schmidt W."/>
            <person name="Lecharny A."/>
            <person name="Aubourg S."/>
            <person name="Chefdor F."/>
            <person name="Cooke R."/>
            <person name="Berger C."/>
            <person name="Monfort A."/>
            <person name="Casacuberta E."/>
            <person name="Gibbons T."/>
            <person name="Weber N."/>
            <person name="Vandenbol M."/>
            <person name="Bargues M."/>
            <person name="Terol J."/>
            <person name="Torres A."/>
            <person name="Perez-Perez A."/>
            <person name="Purnelle B."/>
            <person name="Bent E."/>
            <person name="Johnson S."/>
            <person name="Tacon D."/>
            <person name="Jesse T."/>
            <person name="Heijnen L."/>
            <person name="Schwarz S."/>
            <person name="Scholler P."/>
            <person name="Heber S."/>
            <person name="Francs P."/>
            <person name="Bielke C."/>
            <person name="Frishman D."/>
            <person name="Haase D."/>
            <person name="Lemcke K."/>
            <person name="Mewes H.-W."/>
            <person name="Stocker S."/>
            <person name="Zaccaria P."/>
            <person name="Bevan M."/>
            <person name="Wilson R.K."/>
            <person name="de la Bastide M."/>
            <person name="Habermann K."/>
            <person name="Parnell L."/>
            <person name="Dedhia N."/>
            <person name="Gnoj L."/>
            <person name="Schutz K."/>
            <person name="Huang E."/>
            <person name="Spiegel L."/>
            <person name="Sekhon M."/>
            <person name="Murray J."/>
            <person name="Sheet P."/>
            <person name="Cordes M."/>
            <person name="Abu-Threideh J."/>
            <person name="Stoneking T."/>
            <person name="Kalicki J."/>
            <person name="Graves T."/>
            <person name="Harmon G."/>
            <person name="Edwards J."/>
            <person name="Latreille P."/>
            <person name="Courtney L."/>
            <person name="Cloud J."/>
            <person name="Abbott A."/>
            <person name="Scott K."/>
            <person name="Johnson D."/>
            <person name="Minx P."/>
            <person name="Bentley D."/>
            <person name="Fulton B."/>
            <person name="Miller N."/>
            <person name="Greco T."/>
            <person name="Kemp K."/>
            <person name="Kramer J."/>
            <person name="Fulton L."/>
            <person name="Mardis E."/>
            <person name="Dante M."/>
            <person name="Pepin K."/>
            <person name="Hillier L.W."/>
            <person name="Nelson J."/>
            <person name="Spieth J."/>
            <person name="Ryan E."/>
            <person name="Andrews S."/>
            <person name="Geisel C."/>
            <person name="Layman D."/>
            <person name="Du H."/>
            <person name="Ali J."/>
            <person name="Berghoff A."/>
            <person name="Jones K."/>
            <person name="Drone K."/>
            <person name="Cotton M."/>
            <person name="Joshu C."/>
            <person name="Antonoiu B."/>
            <person name="Zidanic M."/>
            <person name="Strong C."/>
            <person name="Sun H."/>
            <person name="Lamar B."/>
            <person name="Yordan C."/>
            <person name="Ma P."/>
            <person name="Zhong J."/>
            <person name="Preston R."/>
            <person name="Vil D."/>
            <person name="Shekher M."/>
            <person name="Matero A."/>
            <person name="Shah R."/>
            <person name="Swaby I.K."/>
            <person name="O'Shaughnessy A."/>
            <person name="Rodriguez M."/>
            <person name="Hoffman J."/>
            <person name="Till S."/>
            <person name="Granat S."/>
            <person name="Shohdy N."/>
            <person name="Hasegawa A."/>
            <person name="Hameed A."/>
            <person name="Lodhi M."/>
            <person name="Johnson A."/>
            <person name="Chen E."/>
            <person name="Marra M.A."/>
            <person name="Martienssen R."/>
            <person name="McCombie W.R."/>
        </authorList>
    </citation>
    <scope>NUCLEOTIDE SEQUENCE [LARGE SCALE GENOMIC DNA]</scope>
    <source>
        <strain>cv. Columbia</strain>
    </source>
</reference>
<reference key="4">
    <citation type="journal article" date="2017" name="Plant J.">
        <title>Araport11: a complete reannotation of the Arabidopsis thaliana reference genome.</title>
        <authorList>
            <person name="Cheng C.Y."/>
            <person name="Krishnakumar V."/>
            <person name="Chan A.P."/>
            <person name="Thibaud-Nissen F."/>
            <person name="Schobel S."/>
            <person name="Town C.D."/>
        </authorList>
    </citation>
    <scope>GENOME REANNOTATION</scope>
    <source>
        <strain>cv. Columbia</strain>
    </source>
</reference>
<reference key="5">
    <citation type="journal article" date="2003" name="Science">
        <title>Empirical analysis of transcriptional activity in the Arabidopsis genome.</title>
        <authorList>
            <person name="Yamada K."/>
            <person name="Lim J."/>
            <person name="Dale J.M."/>
            <person name="Chen H."/>
            <person name="Shinn P."/>
            <person name="Palm C.J."/>
            <person name="Southwick A.M."/>
            <person name="Wu H.C."/>
            <person name="Kim C.J."/>
            <person name="Nguyen M."/>
            <person name="Pham P.K."/>
            <person name="Cheuk R.F."/>
            <person name="Karlin-Newmann G."/>
            <person name="Liu S.X."/>
            <person name="Lam B."/>
            <person name="Sakano H."/>
            <person name="Wu T."/>
            <person name="Yu G."/>
            <person name="Miranda M."/>
            <person name="Quach H.L."/>
            <person name="Tripp M."/>
            <person name="Chang C.H."/>
            <person name="Lee J.M."/>
            <person name="Toriumi M.J."/>
            <person name="Chan M.M."/>
            <person name="Tang C.C."/>
            <person name="Onodera C.S."/>
            <person name="Deng J.M."/>
            <person name="Akiyama K."/>
            <person name="Ansari Y."/>
            <person name="Arakawa T."/>
            <person name="Banh J."/>
            <person name="Banno F."/>
            <person name="Bowser L."/>
            <person name="Brooks S.Y."/>
            <person name="Carninci P."/>
            <person name="Chao Q."/>
            <person name="Choy N."/>
            <person name="Enju A."/>
            <person name="Goldsmith A.D."/>
            <person name="Gurjal M."/>
            <person name="Hansen N.F."/>
            <person name="Hayashizaki Y."/>
            <person name="Johnson-Hopson C."/>
            <person name="Hsuan V.W."/>
            <person name="Iida K."/>
            <person name="Karnes M."/>
            <person name="Khan S."/>
            <person name="Koesema E."/>
            <person name="Ishida J."/>
            <person name="Jiang P.X."/>
            <person name="Jones T."/>
            <person name="Kawai J."/>
            <person name="Kamiya A."/>
            <person name="Meyers C."/>
            <person name="Nakajima M."/>
            <person name="Narusaka M."/>
            <person name="Seki M."/>
            <person name="Sakurai T."/>
            <person name="Satou M."/>
            <person name="Tamse R."/>
            <person name="Vaysberg M."/>
            <person name="Wallender E.K."/>
            <person name="Wong C."/>
            <person name="Yamamura Y."/>
            <person name="Yuan S."/>
            <person name="Shinozaki K."/>
            <person name="Davis R.W."/>
            <person name="Theologis A."/>
            <person name="Ecker J.R."/>
        </authorList>
    </citation>
    <scope>NUCLEOTIDE SEQUENCE [LARGE SCALE MRNA] (ISOFORM 1)</scope>
    <source>
        <strain>cv. Columbia</strain>
    </source>
</reference>
<reference key="6">
    <citation type="submission" date="2002-03" db="EMBL/GenBank/DDBJ databases">
        <title>Full-length cDNA from Arabidopsis thaliana.</title>
        <authorList>
            <person name="Brover V.V."/>
            <person name="Troukhan M.E."/>
            <person name="Alexandrov N.A."/>
            <person name="Lu Y.-P."/>
            <person name="Flavell R.B."/>
            <person name="Feldmann K.A."/>
        </authorList>
    </citation>
    <scope>NUCLEOTIDE SEQUENCE [LARGE SCALE MRNA] (ISOFORM 1)</scope>
</reference>
<reference key="7">
    <citation type="journal article" date="2002" name="Genetics">
        <title>Three redundant brassinosteroid early response genes encode putative bHLH transcription factors required for normal growth.</title>
        <authorList>
            <person name="Friedrichsen D.M."/>
            <person name="Nemhauser J."/>
            <person name="Muramitsu T."/>
            <person name="Maloof J.N."/>
            <person name="Alonso J."/>
            <person name="Ecker J.R."/>
            <person name="Furuya M."/>
            <person name="Chory J."/>
        </authorList>
    </citation>
    <scope>NUCLEOTIDE SEQUENCE [MRNA] OF 17-304 (ISOFORM 1)</scope>
    <scope>FUNCTION</scope>
    <scope>INDUCTION</scope>
    <scope>DISRUPTION PHENOTYPE</scope>
</reference>
<reference key="8">
    <citation type="journal article" date="2003" name="Plant Cell">
        <title>The Arabidopsis basic/helix-loop-helix transcription factor family.</title>
        <authorList>
            <person name="Toledo-Ortiz G."/>
            <person name="Huq E."/>
            <person name="Quail P.H."/>
        </authorList>
    </citation>
    <scope>GENE FAMILY</scope>
</reference>
<reference key="9">
    <citation type="journal article" date="2003" name="Plant Cell">
        <title>Update on the basic helix-loop-helix transcription factor gene family in Arabidopsis thaliana.</title>
        <authorList>
            <person name="Bailey P.C."/>
            <person name="Martin C."/>
            <person name="Toledo-Ortiz G."/>
            <person name="Quail P.H."/>
            <person name="Huq E."/>
            <person name="Heim M.A."/>
            <person name="Jakoby M."/>
            <person name="Werber M."/>
            <person name="Weisshaar B."/>
        </authorList>
    </citation>
    <scope>GENE FAMILY</scope>
    <scope>NOMENCLATURE</scope>
</reference>
<proteinExistence type="evidence at protein level"/>
<accession>Q93VJ4</accession>
<accession>O23226</accession>
<accession>Q3E9Q1</accession>
<accession>Q6YJU3</accession>
<accession>Q8LF81</accession>
<accession>Q8S3E4</accession>
<accession>Q940I6</accession>
<name>BEE2_ARATH</name>
<protein>
    <recommendedName>
        <fullName>Transcription factor BEE 2</fullName>
    </recommendedName>
    <alternativeName>
        <fullName>Basic helix-loop-helix protein 58</fullName>
        <shortName>AtbHLH58</shortName>
        <shortName>bHLH 58</shortName>
    </alternativeName>
    <alternativeName>
        <fullName>Protein Brassinosteroid enhanced expression 2</fullName>
    </alternativeName>
    <alternativeName>
        <fullName>Transcription factor EN 80</fullName>
    </alternativeName>
    <alternativeName>
        <fullName>bHLH transcription factor bHLH058</fullName>
    </alternativeName>
</protein>
<evidence type="ECO:0000255" key="1">
    <source>
        <dbReference type="PROSITE-ProRule" id="PRU00981"/>
    </source>
</evidence>
<evidence type="ECO:0000256" key="2">
    <source>
        <dbReference type="SAM" id="MobiDB-lite"/>
    </source>
</evidence>
<evidence type="ECO:0000269" key="3">
    <source>
    </source>
</evidence>
<evidence type="ECO:0000269" key="4">
    <source>
    </source>
</evidence>
<evidence type="ECO:0000305" key="5"/>
<keyword id="KW-0025">Alternative splicing</keyword>
<keyword id="KW-0238">DNA-binding</keyword>
<keyword id="KW-0539">Nucleus</keyword>
<keyword id="KW-1185">Reference proteome</keyword>
<keyword id="KW-0804">Transcription</keyword>
<keyword id="KW-0805">Transcription regulation</keyword>
<dbReference type="EMBL" id="AF488591">
    <property type="protein sequence ID" value="AAM10947.1"/>
    <property type="molecule type" value="mRNA"/>
</dbReference>
<dbReference type="EMBL" id="Z99708">
    <property type="protein sequence ID" value="CAB16839.1"/>
    <property type="status" value="ALT_SEQ"/>
    <property type="molecule type" value="Genomic_DNA"/>
</dbReference>
<dbReference type="EMBL" id="AL161589">
    <property type="protein sequence ID" value="CAB80320.1"/>
    <property type="status" value="ALT_SEQ"/>
    <property type="molecule type" value="Genomic_DNA"/>
</dbReference>
<dbReference type="EMBL" id="CP002687">
    <property type="protein sequence ID" value="AEE86669.1"/>
    <property type="molecule type" value="Genomic_DNA"/>
</dbReference>
<dbReference type="EMBL" id="CP002687">
    <property type="protein sequence ID" value="AEE86670.1"/>
    <property type="molecule type" value="Genomic_DNA"/>
</dbReference>
<dbReference type="EMBL" id="AF370231">
    <property type="protein sequence ID" value="AAK44046.1"/>
    <property type="molecule type" value="mRNA"/>
</dbReference>
<dbReference type="EMBL" id="AY059122">
    <property type="protein sequence ID" value="AAL15228.1"/>
    <property type="molecule type" value="mRNA"/>
</dbReference>
<dbReference type="EMBL" id="AY054588">
    <property type="protein sequence ID" value="AAK96779.1"/>
    <property type="molecule type" value="mRNA"/>
</dbReference>
<dbReference type="EMBL" id="BT000388">
    <property type="protein sequence ID" value="AAN15707.1"/>
    <property type="molecule type" value="mRNA"/>
</dbReference>
<dbReference type="EMBL" id="AY084997">
    <property type="protein sequence ID" value="AAM61556.1"/>
    <property type="status" value="ALT_INIT"/>
    <property type="molecule type" value="mRNA"/>
</dbReference>
<dbReference type="EMBL" id="AY138254">
    <property type="protein sequence ID" value="AAN18284.1"/>
    <property type="molecule type" value="mRNA"/>
</dbReference>
<dbReference type="PIR" id="D85431">
    <property type="entry name" value="D85431"/>
</dbReference>
<dbReference type="RefSeq" id="NP_195372.1">
    <molecule id="Q93VJ4-1"/>
    <property type="nucleotide sequence ID" value="NM_119817.3"/>
</dbReference>
<dbReference type="RefSeq" id="NP_849508.1">
    <molecule id="Q93VJ4-2"/>
    <property type="nucleotide sequence ID" value="NM_179177.2"/>
</dbReference>
<dbReference type="SMR" id="Q93VJ4"/>
<dbReference type="BioGRID" id="15088">
    <property type="interactions" value="48"/>
</dbReference>
<dbReference type="FunCoup" id="Q93VJ4">
    <property type="interactions" value="93"/>
</dbReference>
<dbReference type="IntAct" id="Q93VJ4">
    <property type="interactions" value="47"/>
</dbReference>
<dbReference type="STRING" id="3702.Q93VJ4"/>
<dbReference type="PaxDb" id="3702-AT4G36540.1"/>
<dbReference type="ProteomicsDB" id="240823">
    <molecule id="Q93VJ4-1"/>
</dbReference>
<dbReference type="EnsemblPlants" id="AT4G36540.1">
    <molecule id="Q93VJ4-1"/>
    <property type="protein sequence ID" value="AT4G36540.1"/>
    <property type="gene ID" value="AT4G36540"/>
</dbReference>
<dbReference type="EnsemblPlants" id="AT4G36540.2">
    <molecule id="Q93VJ4-2"/>
    <property type="protein sequence ID" value="AT4G36540.2"/>
    <property type="gene ID" value="AT4G36540"/>
</dbReference>
<dbReference type="GeneID" id="829806"/>
<dbReference type="Gramene" id="AT4G36540.1">
    <molecule id="Q93VJ4-1"/>
    <property type="protein sequence ID" value="AT4G36540.1"/>
    <property type="gene ID" value="AT4G36540"/>
</dbReference>
<dbReference type="Gramene" id="AT4G36540.2">
    <molecule id="Q93VJ4-2"/>
    <property type="protein sequence ID" value="AT4G36540.2"/>
    <property type="gene ID" value="AT4G36540"/>
</dbReference>
<dbReference type="KEGG" id="ath:AT4G36540"/>
<dbReference type="Araport" id="AT4G36540"/>
<dbReference type="TAIR" id="AT4G36540">
    <property type="gene designation" value="BEE2"/>
</dbReference>
<dbReference type="eggNOG" id="ENOG502SH3S">
    <property type="taxonomic scope" value="Eukaryota"/>
</dbReference>
<dbReference type="InParanoid" id="Q93VJ4"/>
<dbReference type="OMA" id="WDVHSQC"/>
<dbReference type="PhylomeDB" id="Q93VJ4"/>
<dbReference type="PRO" id="PR:Q93VJ4"/>
<dbReference type="Proteomes" id="UP000006548">
    <property type="component" value="Chromosome 4"/>
</dbReference>
<dbReference type="ExpressionAtlas" id="Q93VJ4">
    <property type="expression patterns" value="baseline and differential"/>
</dbReference>
<dbReference type="GO" id="GO:0005634">
    <property type="term" value="C:nucleus"/>
    <property type="evidence" value="ECO:0007669"/>
    <property type="project" value="UniProtKB-SubCell"/>
</dbReference>
<dbReference type="GO" id="GO:0003677">
    <property type="term" value="F:DNA binding"/>
    <property type="evidence" value="ECO:0000314"/>
    <property type="project" value="TAIR"/>
</dbReference>
<dbReference type="GO" id="GO:0003700">
    <property type="term" value="F:DNA-binding transcription factor activity"/>
    <property type="evidence" value="ECO:0000250"/>
    <property type="project" value="TAIR"/>
</dbReference>
<dbReference type="GO" id="GO:0046983">
    <property type="term" value="F:protein dimerization activity"/>
    <property type="evidence" value="ECO:0007669"/>
    <property type="project" value="InterPro"/>
</dbReference>
<dbReference type="GO" id="GO:0006351">
    <property type="term" value="P:DNA-templated transcription"/>
    <property type="evidence" value="ECO:0000315"/>
    <property type="project" value="TAIR"/>
</dbReference>
<dbReference type="GO" id="GO:0045824">
    <property type="term" value="P:negative regulation of innate immune response"/>
    <property type="evidence" value="ECO:0000315"/>
    <property type="project" value="TAIR"/>
</dbReference>
<dbReference type="GO" id="GO:0006355">
    <property type="term" value="P:regulation of DNA-templated transcription"/>
    <property type="evidence" value="ECO:0000304"/>
    <property type="project" value="TAIR"/>
</dbReference>
<dbReference type="CDD" id="cd18919">
    <property type="entry name" value="bHLH_AtBPE_like"/>
    <property type="match status" value="1"/>
</dbReference>
<dbReference type="FunFam" id="4.10.280.10:FF:000002">
    <property type="entry name" value="Basic helix-loop-helix transcription factor"/>
    <property type="match status" value="1"/>
</dbReference>
<dbReference type="Gene3D" id="4.10.280.10">
    <property type="entry name" value="Helix-loop-helix DNA-binding domain"/>
    <property type="match status" value="1"/>
</dbReference>
<dbReference type="InterPro" id="IPR011598">
    <property type="entry name" value="bHLH_dom"/>
</dbReference>
<dbReference type="InterPro" id="IPR024097">
    <property type="entry name" value="bHLH_ZIP_TF"/>
</dbReference>
<dbReference type="InterPro" id="IPR036638">
    <property type="entry name" value="HLH_DNA-bd_sf"/>
</dbReference>
<dbReference type="PANTHER" id="PTHR12565">
    <property type="entry name" value="STEROL REGULATORY ELEMENT-BINDING PROTEIN"/>
    <property type="match status" value="1"/>
</dbReference>
<dbReference type="PANTHER" id="PTHR12565:SF404">
    <property type="entry name" value="TRANSCRIPTION FACTOR BEE 2"/>
    <property type="match status" value="1"/>
</dbReference>
<dbReference type="Pfam" id="PF00010">
    <property type="entry name" value="HLH"/>
    <property type="match status" value="1"/>
</dbReference>
<dbReference type="SMART" id="SM00353">
    <property type="entry name" value="HLH"/>
    <property type="match status" value="1"/>
</dbReference>
<dbReference type="SUPFAM" id="SSF47459">
    <property type="entry name" value="HLH, helix-loop-helix DNA-binding domain"/>
    <property type="match status" value="1"/>
</dbReference>
<dbReference type="PROSITE" id="PS50888">
    <property type="entry name" value="BHLH"/>
    <property type="match status" value="1"/>
</dbReference>
<dbReference type="PROSITE" id="PS00678">
    <property type="entry name" value="WD_REPEATS_1"/>
    <property type="match status" value="1"/>
</dbReference>